<reference key="1">
    <citation type="journal article" date="1993" name="Mol. Microbiol.">
        <title>Bacillus subtilis genome project: cloning and sequencing of the 97 kb region from 325 degrees to 333 degrees.</title>
        <authorList>
            <person name="Glaser P."/>
            <person name="Kunst F."/>
            <person name="Arnaud M."/>
            <person name="Coudart M.P."/>
            <person name="Gonzales W."/>
            <person name="Hullo M.-F."/>
            <person name="Ionescu M."/>
            <person name="Lubochinsky B."/>
            <person name="Marcelino L."/>
            <person name="Moszer I."/>
            <person name="Presecan E."/>
            <person name="Santana M."/>
            <person name="Schneider E."/>
            <person name="Schweizer J."/>
            <person name="Vertes A."/>
            <person name="Rapoport G."/>
            <person name="Danchin A."/>
        </authorList>
    </citation>
    <scope>NUCLEOTIDE SEQUENCE [GENOMIC DNA]</scope>
    <source>
        <strain>168</strain>
    </source>
</reference>
<reference key="2">
    <citation type="journal article" date="1997" name="Nature">
        <title>The complete genome sequence of the Gram-positive bacterium Bacillus subtilis.</title>
        <authorList>
            <person name="Kunst F."/>
            <person name="Ogasawara N."/>
            <person name="Moszer I."/>
            <person name="Albertini A.M."/>
            <person name="Alloni G."/>
            <person name="Azevedo V."/>
            <person name="Bertero M.G."/>
            <person name="Bessieres P."/>
            <person name="Bolotin A."/>
            <person name="Borchert S."/>
            <person name="Borriss R."/>
            <person name="Boursier L."/>
            <person name="Brans A."/>
            <person name="Braun M."/>
            <person name="Brignell S.C."/>
            <person name="Bron S."/>
            <person name="Brouillet S."/>
            <person name="Bruschi C.V."/>
            <person name="Caldwell B."/>
            <person name="Capuano V."/>
            <person name="Carter N.M."/>
            <person name="Choi S.-K."/>
            <person name="Codani J.-J."/>
            <person name="Connerton I.F."/>
            <person name="Cummings N.J."/>
            <person name="Daniel R.A."/>
            <person name="Denizot F."/>
            <person name="Devine K.M."/>
            <person name="Duesterhoeft A."/>
            <person name="Ehrlich S.D."/>
            <person name="Emmerson P.T."/>
            <person name="Entian K.-D."/>
            <person name="Errington J."/>
            <person name="Fabret C."/>
            <person name="Ferrari E."/>
            <person name="Foulger D."/>
            <person name="Fritz C."/>
            <person name="Fujita M."/>
            <person name="Fujita Y."/>
            <person name="Fuma S."/>
            <person name="Galizzi A."/>
            <person name="Galleron N."/>
            <person name="Ghim S.-Y."/>
            <person name="Glaser P."/>
            <person name="Goffeau A."/>
            <person name="Golightly E.J."/>
            <person name="Grandi G."/>
            <person name="Guiseppi G."/>
            <person name="Guy B.J."/>
            <person name="Haga K."/>
            <person name="Haiech J."/>
            <person name="Harwood C.R."/>
            <person name="Henaut A."/>
            <person name="Hilbert H."/>
            <person name="Holsappel S."/>
            <person name="Hosono S."/>
            <person name="Hullo M.-F."/>
            <person name="Itaya M."/>
            <person name="Jones L.-M."/>
            <person name="Joris B."/>
            <person name="Karamata D."/>
            <person name="Kasahara Y."/>
            <person name="Klaerr-Blanchard M."/>
            <person name="Klein C."/>
            <person name="Kobayashi Y."/>
            <person name="Koetter P."/>
            <person name="Koningstein G."/>
            <person name="Krogh S."/>
            <person name="Kumano M."/>
            <person name="Kurita K."/>
            <person name="Lapidus A."/>
            <person name="Lardinois S."/>
            <person name="Lauber J."/>
            <person name="Lazarevic V."/>
            <person name="Lee S.-M."/>
            <person name="Levine A."/>
            <person name="Liu H."/>
            <person name="Masuda S."/>
            <person name="Mauel C."/>
            <person name="Medigue C."/>
            <person name="Medina N."/>
            <person name="Mellado R.P."/>
            <person name="Mizuno M."/>
            <person name="Moestl D."/>
            <person name="Nakai S."/>
            <person name="Noback M."/>
            <person name="Noone D."/>
            <person name="O'Reilly M."/>
            <person name="Ogawa K."/>
            <person name="Ogiwara A."/>
            <person name="Oudega B."/>
            <person name="Park S.-H."/>
            <person name="Parro V."/>
            <person name="Pohl T.M."/>
            <person name="Portetelle D."/>
            <person name="Porwollik S."/>
            <person name="Prescott A.M."/>
            <person name="Presecan E."/>
            <person name="Pujic P."/>
            <person name="Purnelle B."/>
            <person name="Rapoport G."/>
            <person name="Rey M."/>
            <person name="Reynolds S."/>
            <person name="Rieger M."/>
            <person name="Rivolta C."/>
            <person name="Rocha E."/>
            <person name="Roche B."/>
            <person name="Rose M."/>
            <person name="Sadaie Y."/>
            <person name="Sato T."/>
            <person name="Scanlan E."/>
            <person name="Schleich S."/>
            <person name="Schroeter R."/>
            <person name="Scoffone F."/>
            <person name="Sekiguchi J."/>
            <person name="Sekowska A."/>
            <person name="Seror S.J."/>
            <person name="Serror P."/>
            <person name="Shin B.-S."/>
            <person name="Soldo B."/>
            <person name="Sorokin A."/>
            <person name="Tacconi E."/>
            <person name="Takagi T."/>
            <person name="Takahashi H."/>
            <person name="Takemaru K."/>
            <person name="Takeuchi M."/>
            <person name="Tamakoshi A."/>
            <person name="Tanaka T."/>
            <person name="Terpstra P."/>
            <person name="Tognoni A."/>
            <person name="Tosato V."/>
            <person name="Uchiyama S."/>
            <person name="Vandenbol M."/>
            <person name="Vannier F."/>
            <person name="Vassarotti A."/>
            <person name="Viari A."/>
            <person name="Wambutt R."/>
            <person name="Wedler E."/>
            <person name="Wedler H."/>
            <person name="Weitzenegger T."/>
            <person name="Winters P."/>
            <person name="Wipat A."/>
            <person name="Yamamoto H."/>
            <person name="Yamane K."/>
            <person name="Yasumoto K."/>
            <person name="Yata K."/>
            <person name="Yoshida K."/>
            <person name="Yoshikawa H.-F."/>
            <person name="Zumstein E."/>
            <person name="Yoshikawa H."/>
            <person name="Danchin A."/>
        </authorList>
    </citation>
    <scope>NUCLEOTIDE SEQUENCE [LARGE SCALE GENOMIC DNA]</scope>
    <source>
        <strain>168</strain>
    </source>
</reference>
<protein>
    <recommendedName>
        <fullName>Uncharacterized protein YwdA</fullName>
    </recommendedName>
</protein>
<dbReference type="EMBL" id="X73124">
    <property type="protein sequence ID" value="CAA51607.1"/>
    <property type="molecule type" value="Genomic_DNA"/>
</dbReference>
<dbReference type="EMBL" id="AL009126">
    <property type="protein sequence ID" value="CAB15829.1"/>
    <property type="molecule type" value="Genomic_DNA"/>
</dbReference>
<dbReference type="PIR" id="S39706">
    <property type="entry name" value="S39706"/>
</dbReference>
<dbReference type="RefSeq" id="NP_391682.1">
    <property type="nucleotide sequence ID" value="NC_000964.3"/>
</dbReference>
<dbReference type="RefSeq" id="WP_003243437.1">
    <property type="nucleotide sequence ID" value="NZ_OZ025638.1"/>
</dbReference>
<dbReference type="SMR" id="P39609"/>
<dbReference type="FunCoup" id="P39609">
    <property type="interactions" value="102"/>
</dbReference>
<dbReference type="STRING" id="224308.BSU38030"/>
<dbReference type="PaxDb" id="224308-BSU38030"/>
<dbReference type="EnsemblBacteria" id="CAB15829">
    <property type="protein sequence ID" value="CAB15829"/>
    <property type="gene ID" value="BSU_38030"/>
</dbReference>
<dbReference type="GeneID" id="937276"/>
<dbReference type="KEGG" id="bsu:BSU38030"/>
<dbReference type="PATRIC" id="fig|224308.179.peg.4117"/>
<dbReference type="InParanoid" id="P39609"/>
<dbReference type="OrthoDB" id="2903598at2"/>
<dbReference type="BioCyc" id="BSUB:BSU38030-MONOMER"/>
<dbReference type="Proteomes" id="UP000001570">
    <property type="component" value="Chromosome"/>
</dbReference>
<organism>
    <name type="scientific">Bacillus subtilis (strain 168)</name>
    <dbReference type="NCBI Taxonomy" id="224308"/>
    <lineage>
        <taxon>Bacteria</taxon>
        <taxon>Bacillati</taxon>
        <taxon>Bacillota</taxon>
        <taxon>Bacilli</taxon>
        <taxon>Bacillales</taxon>
        <taxon>Bacillaceae</taxon>
        <taxon>Bacillus</taxon>
    </lineage>
</organism>
<sequence length="82" mass="9555">MNIHEQKITPECLEKAANQVEDKREEYKDVLLQLKKMLGGTTPHSETAEILTRAYEQMKEYALFVQSIETFLRKSANNLKIK</sequence>
<keyword id="KW-1185">Reference proteome</keyword>
<gene>
    <name type="primary">ywdA</name>
    <name type="ordered locus">BSU38030</name>
    <name type="ORF">ipa-51d</name>
</gene>
<proteinExistence type="predicted"/>
<name>YWDA_BACSU</name>
<feature type="chain" id="PRO_0000049963" description="Uncharacterized protein YwdA">
    <location>
        <begin position="1"/>
        <end position="82"/>
    </location>
</feature>
<accession>P39609</accession>